<protein>
    <recommendedName>
        <fullName evidence="1">Ribonuclease H</fullName>
        <shortName evidence="1">RNase H</shortName>
        <ecNumber evidence="1">3.1.26.4</ecNumber>
    </recommendedName>
</protein>
<reference key="1">
    <citation type="journal article" date="2007" name="J. Bacteriol.">
        <title>The complete genome sequence of Roseobacter denitrificans reveals a mixotrophic rather than photosynthetic metabolism.</title>
        <authorList>
            <person name="Swingley W.D."/>
            <person name="Sadekar S."/>
            <person name="Mastrian S.D."/>
            <person name="Matthies H.J."/>
            <person name="Hao J."/>
            <person name="Ramos H."/>
            <person name="Acharya C.R."/>
            <person name="Conrad A.L."/>
            <person name="Taylor H.L."/>
            <person name="Dejesa L.C."/>
            <person name="Shah M.K."/>
            <person name="O'Huallachain M.E."/>
            <person name="Lince M.T."/>
            <person name="Blankenship R.E."/>
            <person name="Beatty J.T."/>
            <person name="Touchman J.W."/>
        </authorList>
    </citation>
    <scope>NUCLEOTIDE SEQUENCE [LARGE SCALE GENOMIC DNA]</scope>
    <source>
        <strain>ATCC 33942 / OCh 114</strain>
    </source>
</reference>
<keyword id="KW-0963">Cytoplasm</keyword>
<keyword id="KW-0255">Endonuclease</keyword>
<keyword id="KW-0378">Hydrolase</keyword>
<keyword id="KW-0460">Magnesium</keyword>
<keyword id="KW-0479">Metal-binding</keyword>
<keyword id="KW-0540">Nuclease</keyword>
<keyword id="KW-1185">Reference proteome</keyword>
<dbReference type="EC" id="3.1.26.4" evidence="1"/>
<dbReference type="EMBL" id="CP000362">
    <property type="protein sequence ID" value="ABG30993.1"/>
    <property type="molecule type" value="Genomic_DNA"/>
</dbReference>
<dbReference type="RefSeq" id="WP_011567613.1">
    <property type="nucleotide sequence ID" value="NC_008209.1"/>
</dbReference>
<dbReference type="SMR" id="Q16AK0"/>
<dbReference type="STRING" id="375451.RD1_1351"/>
<dbReference type="KEGG" id="rde:RD1_1351"/>
<dbReference type="eggNOG" id="COG0328">
    <property type="taxonomic scope" value="Bacteria"/>
</dbReference>
<dbReference type="HOGENOM" id="CLU_030894_6_0_5"/>
<dbReference type="OrthoDB" id="7845843at2"/>
<dbReference type="Proteomes" id="UP000007029">
    <property type="component" value="Chromosome"/>
</dbReference>
<dbReference type="GO" id="GO:0005737">
    <property type="term" value="C:cytoplasm"/>
    <property type="evidence" value="ECO:0007669"/>
    <property type="project" value="UniProtKB-SubCell"/>
</dbReference>
<dbReference type="GO" id="GO:0000287">
    <property type="term" value="F:magnesium ion binding"/>
    <property type="evidence" value="ECO:0007669"/>
    <property type="project" value="UniProtKB-UniRule"/>
</dbReference>
<dbReference type="GO" id="GO:0003676">
    <property type="term" value="F:nucleic acid binding"/>
    <property type="evidence" value="ECO:0007669"/>
    <property type="project" value="InterPro"/>
</dbReference>
<dbReference type="GO" id="GO:0004523">
    <property type="term" value="F:RNA-DNA hybrid ribonuclease activity"/>
    <property type="evidence" value="ECO:0007669"/>
    <property type="project" value="UniProtKB-UniRule"/>
</dbReference>
<dbReference type="GO" id="GO:0043137">
    <property type="term" value="P:DNA replication, removal of RNA primer"/>
    <property type="evidence" value="ECO:0007669"/>
    <property type="project" value="TreeGrafter"/>
</dbReference>
<dbReference type="CDD" id="cd09278">
    <property type="entry name" value="RNase_HI_prokaryote_like"/>
    <property type="match status" value="1"/>
</dbReference>
<dbReference type="FunFam" id="3.30.420.10:FF:000089">
    <property type="entry name" value="Ribonuclease H"/>
    <property type="match status" value="1"/>
</dbReference>
<dbReference type="Gene3D" id="3.30.420.10">
    <property type="entry name" value="Ribonuclease H-like superfamily/Ribonuclease H"/>
    <property type="match status" value="1"/>
</dbReference>
<dbReference type="HAMAP" id="MF_00042">
    <property type="entry name" value="RNase_H"/>
    <property type="match status" value="1"/>
</dbReference>
<dbReference type="InterPro" id="IPR050092">
    <property type="entry name" value="RNase_H"/>
</dbReference>
<dbReference type="InterPro" id="IPR012337">
    <property type="entry name" value="RNaseH-like_sf"/>
</dbReference>
<dbReference type="InterPro" id="IPR002156">
    <property type="entry name" value="RNaseH_domain"/>
</dbReference>
<dbReference type="InterPro" id="IPR036397">
    <property type="entry name" value="RNaseH_sf"/>
</dbReference>
<dbReference type="InterPro" id="IPR022892">
    <property type="entry name" value="RNaseHI"/>
</dbReference>
<dbReference type="NCBIfam" id="NF001236">
    <property type="entry name" value="PRK00203.1"/>
    <property type="match status" value="1"/>
</dbReference>
<dbReference type="PANTHER" id="PTHR10642">
    <property type="entry name" value="RIBONUCLEASE H1"/>
    <property type="match status" value="1"/>
</dbReference>
<dbReference type="PANTHER" id="PTHR10642:SF26">
    <property type="entry name" value="RIBONUCLEASE H1"/>
    <property type="match status" value="1"/>
</dbReference>
<dbReference type="Pfam" id="PF00075">
    <property type="entry name" value="RNase_H"/>
    <property type="match status" value="1"/>
</dbReference>
<dbReference type="SUPFAM" id="SSF53098">
    <property type="entry name" value="Ribonuclease H-like"/>
    <property type="match status" value="1"/>
</dbReference>
<dbReference type="PROSITE" id="PS50879">
    <property type="entry name" value="RNASE_H_1"/>
    <property type="match status" value="1"/>
</dbReference>
<gene>
    <name evidence="1" type="primary">rnhA</name>
    <name type="ordered locus">RD1_1351</name>
</gene>
<organism>
    <name type="scientific">Roseobacter denitrificans (strain ATCC 33942 / OCh 114)</name>
    <name type="common">Erythrobacter sp. (strain OCh 114)</name>
    <name type="synonym">Roseobacter denitrificans</name>
    <dbReference type="NCBI Taxonomy" id="375451"/>
    <lineage>
        <taxon>Bacteria</taxon>
        <taxon>Pseudomonadati</taxon>
        <taxon>Pseudomonadota</taxon>
        <taxon>Alphaproteobacteria</taxon>
        <taxon>Rhodobacterales</taxon>
        <taxon>Roseobacteraceae</taxon>
        <taxon>Roseobacter</taxon>
    </lineage>
</organism>
<proteinExistence type="inferred from homology"/>
<feature type="chain" id="PRO_0000332671" description="Ribonuclease H">
    <location>
        <begin position="1"/>
        <end position="150"/>
    </location>
</feature>
<feature type="domain" description="RNase H type-1" evidence="2">
    <location>
        <begin position="1"/>
        <end position="146"/>
    </location>
</feature>
<feature type="binding site" evidence="1">
    <location>
        <position position="9"/>
    </location>
    <ligand>
        <name>Mg(2+)</name>
        <dbReference type="ChEBI" id="CHEBI:18420"/>
        <label>1</label>
    </ligand>
</feature>
<feature type="binding site" evidence="1">
    <location>
        <position position="9"/>
    </location>
    <ligand>
        <name>Mg(2+)</name>
        <dbReference type="ChEBI" id="CHEBI:18420"/>
        <label>2</label>
    </ligand>
</feature>
<feature type="binding site" evidence="1">
    <location>
        <position position="52"/>
    </location>
    <ligand>
        <name>Mg(2+)</name>
        <dbReference type="ChEBI" id="CHEBI:18420"/>
        <label>1</label>
    </ligand>
</feature>
<feature type="binding site" evidence="1">
    <location>
        <position position="74"/>
    </location>
    <ligand>
        <name>Mg(2+)</name>
        <dbReference type="ChEBI" id="CHEBI:18420"/>
        <label>1</label>
    </ligand>
</feature>
<feature type="binding site" evidence="1">
    <location>
        <position position="138"/>
    </location>
    <ligand>
        <name>Mg(2+)</name>
        <dbReference type="ChEBI" id="CHEBI:18420"/>
        <label>2</label>
    </ligand>
</feature>
<comment type="function">
    <text evidence="1">Endonuclease that specifically degrades the RNA of RNA-DNA hybrids.</text>
</comment>
<comment type="catalytic activity">
    <reaction evidence="1">
        <text>Endonucleolytic cleavage to 5'-phosphomonoester.</text>
        <dbReference type="EC" id="3.1.26.4"/>
    </reaction>
</comment>
<comment type="cofactor">
    <cofactor evidence="1">
        <name>Mg(2+)</name>
        <dbReference type="ChEBI" id="CHEBI:18420"/>
    </cofactor>
    <text evidence="1">Binds 1 Mg(2+) ion per subunit. May bind a second metal ion at a regulatory site, or after substrate binding.</text>
</comment>
<comment type="subunit">
    <text evidence="1">Monomer.</text>
</comment>
<comment type="subcellular location">
    <subcellularLocation>
        <location evidence="1">Cytoplasm</location>
    </subcellularLocation>
</comment>
<comment type="similarity">
    <text evidence="1">Belongs to the RNase H family.</text>
</comment>
<evidence type="ECO:0000255" key="1">
    <source>
        <dbReference type="HAMAP-Rule" id="MF_00042"/>
    </source>
</evidence>
<evidence type="ECO:0000255" key="2">
    <source>
        <dbReference type="PROSITE-ProRule" id="PRU00408"/>
    </source>
</evidence>
<accession>Q16AK0</accession>
<sequence>MPELFAYTDGACSGNPGPGGWGVLLQAKEGDRLVKERALKGGEAHTTNNRMELLAAINALESLSRASTITVVTDSNYVKNGITGWIHGWKRNGWKNAAKKPVANAELWQRLDEANARHDVTWKWVKGHAGHAENERADELARAGMAPFKP</sequence>
<name>RNH_ROSDO</name>